<sequence length="177" mass="20576">MIVGLSNPKKEYHSTRHNVGSWYLYSLAESYLRNFKNEKKFFGFTTSLNIESNYIRLLIPNIFMNINGQSVFKMASFYNINLSEILIVHDDLELQPGISKLKYSYGHNGHNGLRDIVNTFNKNINFYRFRIGIGRPINRDQIASFVLSNPTKKEKILIQKSILHAIEKNVLSNILKF</sequence>
<accession>P57287</accession>
<keyword id="KW-0963">Cytoplasm</keyword>
<keyword id="KW-0378">Hydrolase</keyword>
<keyword id="KW-1185">Reference proteome</keyword>
<keyword id="KW-0694">RNA-binding</keyword>
<keyword id="KW-0820">tRNA-binding</keyword>
<evidence type="ECO:0000255" key="1">
    <source>
        <dbReference type="HAMAP-Rule" id="MF_00083"/>
    </source>
</evidence>
<proteinExistence type="inferred from homology"/>
<comment type="function">
    <text evidence="1">Hydrolyzes ribosome-free peptidyl-tRNAs (with 1 or more amino acids incorporated), which drop off the ribosome during protein synthesis, or as a result of ribosome stalling.</text>
</comment>
<comment type="function">
    <text evidence="1">Catalyzes the release of premature peptidyl moieties from peptidyl-tRNA molecules trapped in stalled 50S ribosomal subunits, and thus maintains levels of free tRNAs and 50S ribosomes.</text>
</comment>
<comment type="catalytic activity">
    <reaction evidence="1">
        <text>an N-acyl-L-alpha-aminoacyl-tRNA + H2O = an N-acyl-L-amino acid + a tRNA + H(+)</text>
        <dbReference type="Rhea" id="RHEA:54448"/>
        <dbReference type="Rhea" id="RHEA-COMP:10123"/>
        <dbReference type="Rhea" id="RHEA-COMP:13883"/>
        <dbReference type="ChEBI" id="CHEBI:15377"/>
        <dbReference type="ChEBI" id="CHEBI:15378"/>
        <dbReference type="ChEBI" id="CHEBI:59874"/>
        <dbReference type="ChEBI" id="CHEBI:78442"/>
        <dbReference type="ChEBI" id="CHEBI:138191"/>
        <dbReference type="EC" id="3.1.1.29"/>
    </reaction>
</comment>
<comment type="subunit">
    <text evidence="1">Monomer.</text>
</comment>
<comment type="subcellular location">
    <subcellularLocation>
        <location evidence="1">Cytoplasm</location>
    </subcellularLocation>
</comment>
<comment type="similarity">
    <text evidence="1">Belongs to the PTH family.</text>
</comment>
<gene>
    <name evidence="1" type="primary">pth</name>
    <name type="ordered locus">BU190</name>
</gene>
<organism>
    <name type="scientific">Buchnera aphidicola subsp. Acyrthosiphon pisum (strain APS)</name>
    <name type="common">Acyrthosiphon pisum symbiotic bacterium</name>
    <dbReference type="NCBI Taxonomy" id="107806"/>
    <lineage>
        <taxon>Bacteria</taxon>
        <taxon>Pseudomonadati</taxon>
        <taxon>Pseudomonadota</taxon>
        <taxon>Gammaproteobacteria</taxon>
        <taxon>Enterobacterales</taxon>
        <taxon>Erwiniaceae</taxon>
        <taxon>Buchnera</taxon>
    </lineage>
</organism>
<dbReference type="EC" id="3.1.1.29" evidence="1"/>
<dbReference type="EMBL" id="BA000003">
    <property type="protein sequence ID" value="BAB12907.1"/>
    <property type="molecule type" value="Genomic_DNA"/>
</dbReference>
<dbReference type="RefSeq" id="NP_240021.1">
    <property type="nucleotide sequence ID" value="NC_002528.1"/>
</dbReference>
<dbReference type="RefSeq" id="WP_010895991.1">
    <property type="nucleotide sequence ID" value="NZ_AP036055.1"/>
</dbReference>
<dbReference type="SMR" id="P57287"/>
<dbReference type="STRING" id="563178.BUAP5A_187"/>
<dbReference type="EnsemblBacteria" id="BAB12907">
    <property type="protein sequence ID" value="BAB12907"/>
    <property type="gene ID" value="BAB12907"/>
</dbReference>
<dbReference type="KEGG" id="buc:BU190"/>
<dbReference type="PATRIC" id="fig|107806.10.peg.201"/>
<dbReference type="eggNOG" id="COG0193">
    <property type="taxonomic scope" value="Bacteria"/>
</dbReference>
<dbReference type="HOGENOM" id="CLU_062456_3_1_6"/>
<dbReference type="Proteomes" id="UP000001806">
    <property type="component" value="Chromosome"/>
</dbReference>
<dbReference type="GO" id="GO:0005737">
    <property type="term" value="C:cytoplasm"/>
    <property type="evidence" value="ECO:0007669"/>
    <property type="project" value="UniProtKB-SubCell"/>
</dbReference>
<dbReference type="GO" id="GO:0004045">
    <property type="term" value="F:peptidyl-tRNA hydrolase activity"/>
    <property type="evidence" value="ECO:0007669"/>
    <property type="project" value="UniProtKB-UniRule"/>
</dbReference>
<dbReference type="GO" id="GO:0000049">
    <property type="term" value="F:tRNA binding"/>
    <property type="evidence" value="ECO:0007669"/>
    <property type="project" value="UniProtKB-UniRule"/>
</dbReference>
<dbReference type="GO" id="GO:0006515">
    <property type="term" value="P:protein quality control for misfolded or incompletely synthesized proteins"/>
    <property type="evidence" value="ECO:0007669"/>
    <property type="project" value="UniProtKB-UniRule"/>
</dbReference>
<dbReference type="GO" id="GO:0072344">
    <property type="term" value="P:rescue of stalled ribosome"/>
    <property type="evidence" value="ECO:0007669"/>
    <property type="project" value="UniProtKB-UniRule"/>
</dbReference>
<dbReference type="CDD" id="cd00462">
    <property type="entry name" value="PTH"/>
    <property type="match status" value="1"/>
</dbReference>
<dbReference type="FunFam" id="3.40.50.1470:FF:000001">
    <property type="entry name" value="Peptidyl-tRNA hydrolase"/>
    <property type="match status" value="1"/>
</dbReference>
<dbReference type="Gene3D" id="3.40.50.1470">
    <property type="entry name" value="Peptidyl-tRNA hydrolase"/>
    <property type="match status" value="1"/>
</dbReference>
<dbReference type="HAMAP" id="MF_00083">
    <property type="entry name" value="Pept_tRNA_hydro_bact"/>
    <property type="match status" value="1"/>
</dbReference>
<dbReference type="InterPro" id="IPR001328">
    <property type="entry name" value="Pept_tRNA_hydro"/>
</dbReference>
<dbReference type="InterPro" id="IPR018171">
    <property type="entry name" value="Pept_tRNA_hydro_CS"/>
</dbReference>
<dbReference type="InterPro" id="IPR036416">
    <property type="entry name" value="Pept_tRNA_hydro_sf"/>
</dbReference>
<dbReference type="NCBIfam" id="TIGR00447">
    <property type="entry name" value="pth"/>
    <property type="match status" value="1"/>
</dbReference>
<dbReference type="PANTHER" id="PTHR17224">
    <property type="entry name" value="PEPTIDYL-TRNA HYDROLASE"/>
    <property type="match status" value="1"/>
</dbReference>
<dbReference type="PANTHER" id="PTHR17224:SF1">
    <property type="entry name" value="PEPTIDYL-TRNA HYDROLASE"/>
    <property type="match status" value="1"/>
</dbReference>
<dbReference type="Pfam" id="PF01195">
    <property type="entry name" value="Pept_tRNA_hydro"/>
    <property type="match status" value="1"/>
</dbReference>
<dbReference type="SUPFAM" id="SSF53178">
    <property type="entry name" value="Peptidyl-tRNA hydrolase-like"/>
    <property type="match status" value="1"/>
</dbReference>
<dbReference type="PROSITE" id="PS01196">
    <property type="entry name" value="PEPT_TRNA_HYDROL_2"/>
    <property type="match status" value="1"/>
</dbReference>
<name>PTH_BUCAI</name>
<protein>
    <recommendedName>
        <fullName evidence="1">Peptidyl-tRNA hydrolase</fullName>
        <shortName evidence="1">Pth</shortName>
        <ecNumber evidence="1">3.1.1.29</ecNumber>
    </recommendedName>
</protein>
<feature type="chain" id="PRO_0000187707" description="Peptidyl-tRNA hydrolase">
    <location>
        <begin position="1"/>
        <end position="177"/>
    </location>
</feature>
<feature type="active site" description="Proton acceptor" evidence="1">
    <location>
        <position position="17"/>
    </location>
</feature>
<feature type="binding site" evidence="1">
    <location>
        <position position="12"/>
    </location>
    <ligand>
        <name>tRNA</name>
        <dbReference type="ChEBI" id="CHEBI:17843"/>
    </ligand>
</feature>
<feature type="binding site" evidence="1">
    <location>
        <position position="63"/>
    </location>
    <ligand>
        <name>tRNA</name>
        <dbReference type="ChEBI" id="CHEBI:17843"/>
    </ligand>
</feature>
<feature type="binding site" evidence="1">
    <location>
        <position position="65"/>
    </location>
    <ligand>
        <name>tRNA</name>
        <dbReference type="ChEBI" id="CHEBI:17843"/>
    </ligand>
</feature>
<feature type="binding site" evidence="1">
    <location>
        <position position="111"/>
    </location>
    <ligand>
        <name>tRNA</name>
        <dbReference type="ChEBI" id="CHEBI:17843"/>
    </ligand>
</feature>
<feature type="site" description="Discriminates between blocked and unblocked aminoacyl-tRNA" evidence="1">
    <location>
        <position position="7"/>
    </location>
</feature>
<feature type="site" description="Stabilizes the basic form of H active site to accept a proton" evidence="1">
    <location>
        <position position="90"/>
    </location>
</feature>
<reference key="1">
    <citation type="journal article" date="2000" name="Nature">
        <title>Genome sequence of the endocellular bacterial symbiont of aphids Buchnera sp. APS.</title>
        <authorList>
            <person name="Shigenobu S."/>
            <person name="Watanabe H."/>
            <person name="Hattori M."/>
            <person name="Sakaki Y."/>
            <person name="Ishikawa H."/>
        </authorList>
    </citation>
    <scope>NUCLEOTIDE SEQUENCE [LARGE SCALE GENOMIC DNA]</scope>
    <source>
        <strain>APS</strain>
    </source>
</reference>